<sequence length="84" mass="9751">MRKDIHPAYQQVLFHDTNADVYFLIGSTIQTKQTKEYQGQVYPYVTLDISSASHPFYTGEVRQASNEGRVASFNKRFARFNRKS</sequence>
<accession>B2I2S7</accession>
<keyword id="KW-0687">Ribonucleoprotein</keyword>
<keyword id="KW-0689">Ribosomal protein</keyword>
<feature type="chain" id="PRO_1000126776" description="Large ribosomal subunit protein bL31B">
    <location>
        <begin position="1"/>
        <end position="84"/>
    </location>
</feature>
<evidence type="ECO:0000255" key="1">
    <source>
        <dbReference type="HAMAP-Rule" id="MF_00502"/>
    </source>
</evidence>
<evidence type="ECO:0000305" key="2"/>
<protein>
    <recommendedName>
        <fullName evidence="1">Large ribosomal subunit protein bL31B</fullName>
    </recommendedName>
    <alternativeName>
        <fullName evidence="2">50S ribosomal protein L31 type B</fullName>
    </alternativeName>
</protein>
<name>RL31B_ACIBC</name>
<reference key="1">
    <citation type="journal article" date="2008" name="Antimicrob. Agents Chemother.">
        <title>Whole-genome pyrosequencing of an epidemic multidrug-resistant Acinetobacter baumannii strain belonging to the European clone II group.</title>
        <authorList>
            <person name="Iacono M."/>
            <person name="Villa L."/>
            <person name="Fortini D."/>
            <person name="Bordoni R."/>
            <person name="Imperi F."/>
            <person name="Bonnal R.J."/>
            <person name="Sicheritz-Ponten T."/>
            <person name="De Bellis G."/>
            <person name="Visca P."/>
            <person name="Cassone A."/>
            <person name="Carattoli A."/>
        </authorList>
    </citation>
    <scope>NUCLEOTIDE SEQUENCE [LARGE SCALE GENOMIC DNA]</scope>
    <source>
        <strain>ACICU</strain>
    </source>
</reference>
<gene>
    <name evidence="1" type="primary">rpmE2</name>
    <name type="ordered locus">ACICU_00400</name>
</gene>
<organism>
    <name type="scientific">Acinetobacter baumannii (strain ACICU)</name>
    <dbReference type="NCBI Taxonomy" id="405416"/>
    <lineage>
        <taxon>Bacteria</taxon>
        <taxon>Pseudomonadati</taxon>
        <taxon>Pseudomonadota</taxon>
        <taxon>Gammaproteobacteria</taxon>
        <taxon>Moraxellales</taxon>
        <taxon>Moraxellaceae</taxon>
        <taxon>Acinetobacter</taxon>
        <taxon>Acinetobacter calcoaceticus/baumannii complex</taxon>
    </lineage>
</organism>
<proteinExistence type="inferred from homology"/>
<dbReference type="EMBL" id="CP000863">
    <property type="protein sequence ID" value="ACC55712.1"/>
    <property type="molecule type" value="Genomic_DNA"/>
</dbReference>
<dbReference type="RefSeq" id="WP_001224256.1">
    <property type="nucleotide sequence ID" value="NZ_CP031380.1"/>
</dbReference>
<dbReference type="SMR" id="B2I2S7"/>
<dbReference type="KEGG" id="abc:ACICU_00400"/>
<dbReference type="HOGENOM" id="CLU_114306_2_1_6"/>
<dbReference type="Proteomes" id="UP000008839">
    <property type="component" value="Chromosome"/>
</dbReference>
<dbReference type="GO" id="GO:1990904">
    <property type="term" value="C:ribonucleoprotein complex"/>
    <property type="evidence" value="ECO:0007669"/>
    <property type="project" value="UniProtKB-KW"/>
</dbReference>
<dbReference type="GO" id="GO:0005840">
    <property type="term" value="C:ribosome"/>
    <property type="evidence" value="ECO:0007669"/>
    <property type="project" value="UniProtKB-KW"/>
</dbReference>
<dbReference type="GO" id="GO:0003735">
    <property type="term" value="F:structural constituent of ribosome"/>
    <property type="evidence" value="ECO:0007669"/>
    <property type="project" value="InterPro"/>
</dbReference>
<dbReference type="GO" id="GO:0006412">
    <property type="term" value="P:translation"/>
    <property type="evidence" value="ECO:0007669"/>
    <property type="project" value="UniProtKB-UniRule"/>
</dbReference>
<dbReference type="Gene3D" id="4.10.830.30">
    <property type="entry name" value="Ribosomal protein L31"/>
    <property type="match status" value="1"/>
</dbReference>
<dbReference type="HAMAP" id="MF_00502">
    <property type="entry name" value="Ribosomal_bL31_2"/>
    <property type="match status" value="1"/>
</dbReference>
<dbReference type="InterPro" id="IPR034704">
    <property type="entry name" value="Ribosomal_bL28/bL31-like_sf"/>
</dbReference>
<dbReference type="InterPro" id="IPR002150">
    <property type="entry name" value="Ribosomal_bL31"/>
</dbReference>
<dbReference type="InterPro" id="IPR027493">
    <property type="entry name" value="Ribosomal_bL31_B"/>
</dbReference>
<dbReference type="InterPro" id="IPR042105">
    <property type="entry name" value="Ribosomal_bL31_sf"/>
</dbReference>
<dbReference type="NCBIfam" id="TIGR00105">
    <property type="entry name" value="L31"/>
    <property type="match status" value="1"/>
</dbReference>
<dbReference type="NCBIfam" id="NF002462">
    <property type="entry name" value="PRK01678.1"/>
    <property type="match status" value="1"/>
</dbReference>
<dbReference type="PANTHER" id="PTHR33280">
    <property type="entry name" value="50S RIBOSOMAL PROTEIN L31, CHLOROPLASTIC"/>
    <property type="match status" value="1"/>
</dbReference>
<dbReference type="PANTHER" id="PTHR33280:SF1">
    <property type="entry name" value="LARGE RIBOSOMAL SUBUNIT PROTEIN BL31C"/>
    <property type="match status" value="1"/>
</dbReference>
<dbReference type="Pfam" id="PF01197">
    <property type="entry name" value="Ribosomal_L31"/>
    <property type="match status" value="1"/>
</dbReference>
<dbReference type="PRINTS" id="PR01249">
    <property type="entry name" value="RIBOSOMALL31"/>
</dbReference>
<dbReference type="SUPFAM" id="SSF143800">
    <property type="entry name" value="L28p-like"/>
    <property type="match status" value="1"/>
</dbReference>
<dbReference type="PROSITE" id="PS01143">
    <property type="entry name" value="RIBOSOMAL_L31"/>
    <property type="match status" value="1"/>
</dbReference>
<comment type="subunit">
    <text evidence="1">Part of the 50S ribosomal subunit.</text>
</comment>
<comment type="similarity">
    <text evidence="1">Belongs to the bacterial ribosomal protein bL31 family. Type B subfamily.</text>
</comment>